<comment type="function">
    <text evidence="1">Catalyzes the attachment of alanine to tRNA(Ala) in a two-step reaction: alanine is first activated by ATP to form Ala-AMP and then transferred to the acceptor end of tRNA(Ala). Also edits incorrectly charged Ser-tRNA(Ala) and Gly-tRNA(Ala) via its editing domain.</text>
</comment>
<comment type="catalytic activity">
    <reaction evidence="1">
        <text>tRNA(Ala) + L-alanine + ATP = L-alanyl-tRNA(Ala) + AMP + diphosphate</text>
        <dbReference type="Rhea" id="RHEA:12540"/>
        <dbReference type="Rhea" id="RHEA-COMP:9657"/>
        <dbReference type="Rhea" id="RHEA-COMP:9923"/>
        <dbReference type="ChEBI" id="CHEBI:30616"/>
        <dbReference type="ChEBI" id="CHEBI:33019"/>
        <dbReference type="ChEBI" id="CHEBI:57972"/>
        <dbReference type="ChEBI" id="CHEBI:78442"/>
        <dbReference type="ChEBI" id="CHEBI:78497"/>
        <dbReference type="ChEBI" id="CHEBI:456215"/>
        <dbReference type="EC" id="6.1.1.7"/>
    </reaction>
</comment>
<comment type="cofactor">
    <cofactor evidence="1">
        <name>Zn(2+)</name>
        <dbReference type="ChEBI" id="CHEBI:29105"/>
    </cofactor>
    <text evidence="1">Binds 1 zinc ion per subunit.</text>
</comment>
<comment type="subcellular location">
    <subcellularLocation>
        <location evidence="1">Cytoplasm</location>
    </subcellularLocation>
</comment>
<comment type="domain">
    <text evidence="1">Consists of three domains; the N-terminal catalytic domain, the editing domain and the C-terminal C-Ala domain. The editing domain removes incorrectly charged amino acids, while the C-Ala domain, along with tRNA(Ala), serves as a bridge to cooperatively bring together the editing and aminoacylation centers thus stimulating deacylation of misacylated tRNAs.</text>
</comment>
<comment type="similarity">
    <text evidence="1">Belongs to the class-II aminoacyl-tRNA synthetase family.</text>
</comment>
<accession>A5UKU6</accession>
<evidence type="ECO:0000255" key="1">
    <source>
        <dbReference type="HAMAP-Rule" id="MF_00036"/>
    </source>
</evidence>
<sequence>MLEIFDKLGYKKQKCKTCGHEFYAQVDRDTCGDAPCDEYEFIGNPATDKPYTLYEIQQVFREFLEKEGHTPIKRYPILAKRWRDDVFLVGASIFCFQPWVTSGMVKPPANPLEIEQPSVRLNDVDNVGRTGRHMTCFTMGSHTVINTEENFIYWEDETIRLCHEFFKYIGINTEEICFIKSWWSGGGNEGPCYEVCVRGVELATLVFIQYKTLDNGEKEEIPIKVVDTGYGLERIAWISQGTPTAYDACFAPVVDKLKELTDVKVNTDILARNAQIAGMMDIEDIGDIKELRQQVANSLGITLDELLESAEPMEAIYIIADHTRCLAFMLADGIIPSNVKEGYLARLVLRRTIRFMKELNMKESLAEVMGIQLEFLTKFYPEIKDSEDHIMNIISLEEERYQSTIKKGTSIVKRSIKRLKKEGKTEMPLDMLMDLYDAHGIPPETVVEIAGDNFTVNVPDNFFTLVAGAHEKDTSNKKESFEIDYPETDLLFYKDFNQKEFEAEVLGVVEKDGKNTLVFDKTVFYPEGGGQPSDVGTISVDGAVVNINYAEKVNNVVLHHVDGDVDLDNFVGKKVEGKIDWNRRITLARHHSATHLIVAAARKILGEHIWQAGAQKGVSRSRIDLSHYKRISQEELNEIEKLANEYVMDNIELDIKFYTRDEAESLYGFKLYQGGIVPGKSIRVVKIPGIDVQACAGTHVLRTGDIGPIKINKTERVQDGVERIDFSAGTAAVDSIQNENKLLRESSGIFKVDDDQLPKTCDRFFSEWKAQKNEIDKLKSEIASLKMNSLADDVTEINGLKVVKQLIDADFKELQKIATDFTDNDKADVVLMGNNDGKIVGAASQNAIDAGIKVNEIIKKAAGVLGGGGGGRLTLAQGAGPKCENMNEALNIAIDLI</sequence>
<dbReference type="EC" id="6.1.1.7" evidence="1"/>
<dbReference type="EMBL" id="CP000678">
    <property type="protein sequence ID" value="ABQ86824.1"/>
    <property type="molecule type" value="Genomic_DNA"/>
</dbReference>
<dbReference type="SMR" id="A5UKU6"/>
<dbReference type="STRING" id="420247.Msm_0619"/>
<dbReference type="EnsemblBacteria" id="ABQ86824">
    <property type="protein sequence ID" value="ABQ86824"/>
    <property type="gene ID" value="Msm_0619"/>
</dbReference>
<dbReference type="KEGG" id="msi:Msm_0619"/>
<dbReference type="PATRIC" id="fig|420247.28.peg.616"/>
<dbReference type="eggNOG" id="arCOG01255">
    <property type="taxonomic scope" value="Archaea"/>
</dbReference>
<dbReference type="HOGENOM" id="CLU_004485_4_0_2"/>
<dbReference type="Proteomes" id="UP000001992">
    <property type="component" value="Chromosome"/>
</dbReference>
<dbReference type="GO" id="GO:0005737">
    <property type="term" value="C:cytoplasm"/>
    <property type="evidence" value="ECO:0007669"/>
    <property type="project" value="UniProtKB-SubCell"/>
</dbReference>
<dbReference type="GO" id="GO:0004813">
    <property type="term" value="F:alanine-tRNA ligase activity"/>
    <property type="evidence" value="ECO:0007669"/>
    <property type="project" value="UniProtKB-UniRule"/>
</dbReference>
<dbReference type="GO" id="GO:0002161">
    <property type="term" value="F:aminoacyl-tRNA deacylase activity"/>
    <property type="evidence" value="ECO:0007669"/>
    <property type="project" value="TreeGrafter"/>
</dbReference>
<dbReference type="GO" id="GO:0005524">
    <property type="term" value="F:ATP binding"/>
    <property type="evidence" value="ECO:0007669"/>
    <property type="project" value="UniProtKB-UniRule"/>
</dbReference>
<dbReference type="GO" id="GO:0000049">
    <property type="term" value="F:tRNA binding"/>
    <property type="evidence" value="ECO:0007669"/>
    <property type="project" value="UniProtKB-KW"/>
</dbReference>
<dbReference type="GO" id="GO:0008270">
    <property type="term" value="F:zinc ion binding"/>
    <property type="evidence" value="ECO:0007669"/>
    <property type="project" value="UniProtKB-UniRule"/>
</dbReference>
<dbReference type="GO" id="GO:0006419">
    <property type="term" value="P:alanyl-tRNA aminoacylation"/>
    <property type="evidence" value="ECO:0007669"/>
    <property type="project" value="UniProtKB-UniRule"/>
</dbReference>
<dbReference type="FunFam" id="3.10.310.40:FF:000001">
    <property type="entry name" value="Alanine--tRNA ligase"/>
    <property type="match status" value="1"/>
</dbReference>
<dbReference type="FunFam" id="3.30.54.20:FF:000004">
    <property type="entry name" value="Alanine--tRNA ligase"/>
    <property type="match status" value="1"/>
</dbReference>
<dbReference type="FunFam" id="3.30.980.10:FF:000004">
    <property type="entry name" value="Alanine--tRNA ligase, cytoplasmic"/>
    <property type="match status" value="1"/>
</dbReference>
<dbReference type="Gene3D" id="2.40.30.130">
    <property type="match status" value="1"/>
</dbReference>
<dbReference type="Gene3D" id="3.10.310.40">
    <property type="match status" value="1"/>
</dbReference>
<dbReference type="Gene3D" id="3.30.54.20">
    <property type="match status" value="1"/>
</dbReference>
<dbReference type="Gene3D" id="6.10.250.550">
    <property type="match status" value="1"/>
</dbReference>
<dbReference type="Gene3D" id="3.30.930.10">
    <property type="entry name" value="Bira Bifunctional Protein, Domain 2"/>
    <property type="match status" value="1"/>
</dbReference>
<dbReference type="Gene3D" id="3.30.980.10">
    <property type="entry name" value="Threonyl-trna Synthetase, Chain A, domain 2"/>
    <property type="match status" value="1"/>
</dbReference>
<dbReference type="HAMAP" id="MF_00036_A">
    <property type="entry name" value="Ala_tRNA_synth_A"/>
    <property type="match status" value="1"/>
</dbReference>
<dbReference type="InterPro" id="IPR045864">
    <property type="entry name" value="aa-tRNA-synth_II/BPL/LPL"/>
</dbReference>
<dbReference type="InterPro" id="IPR002318">
    <property type="entry name" value="Ala-tRNA-lgiase_IIc"/>
</dbReference>
<dbReference type="InterPro" id="IPR018162">
    <property type="entry name" value="Ala-tRNA-ligase_IIc_anticod-bd"/>
</dbReference>
<dbReference type="InterPro" id="IPR018165">
    <property type="entry name" value="Ala-tRNA-synth_IIc_core"/>
</dbReference>
<dbReference type="InterPro" id="IPR018164">
    <property type="entry name" value="Ala-tRNA-synth_IIc_N"/>
</dbReference>
<dbReference type="InterPro" id="IPR022429">
    <property type="entry name" value="Ala-tRNA_lgiase_arc"/>
</dbReference>
<dbReference type="InterPro" id="IPR050058">
    <property type="entry name" value="Ala-tRNA_ligase"/>
</dbReference>
<dbReference type="InterPro" id="IPR003156">
    <property type="entry name" value="DHHA1_dom"/>
</dbReference>
<dbReference type="InterPro" id="IPR018163">
    <property type="entry name" value="Thr/Ala-tRNA-synth_IIc_edit"/>
</dbReference>
<dbReference type="InterPro" id="IPR009000">
    <property type="entry name" value="Transl_B-barrel_sf"/>
</dbReference>
<dbReference type="InterPro" id="IPR012947">
    <property type="entry name" value="tRNA_SAD"/>
</dbReference>
<dbReference type="NCBIfam" id="TIGR03683">
    <property type="entry name" value="A-tRNA_syn_arch"/>
    <property type="match status" value="1"/>
</dbReference>
<dbReference type="NCBIfam" id="TIGR00344">
    <property type="entry name" value="alaS"/>
    <property type="match status" value="1"/>
</dbReference>
<dbReference type="PANTHER" id="PTHR11777:SF9">
    <property type="entry name" value="ALANINE--TRNA LIGASE, CYTOPLASMIC"/>
    <property type="match status" value="1"/>
</dbReference>
<dbReference type="PANTHER" id="PTHR11777">
    <property type="entry name" value="ALANYL-TRNA SYNTHETASE"/>
    <property type="match status" value="1"/>
</dbReference>
<dbReference type="Pfam" id="PF02272">
    <property type="entry name" value="DHHA1"/>
    <property type="match status" value="1"/>
</dbReference>
<dbReference type="Pfam" id="PF01411">
    <property type="entry name" value="tRNA-synt_2c"/>
    <property type="match status" value="1"/>
</dbReference>
<dbReference type="Pfam" id="PF07973">
    <property type="entry name" value="tRNA_SAD"/>
    <property type="match status" value="1"/>
</dbReference>
<dbReference type="PRINTS" id="PR00980">
    <property type="entry name" value="TRNASYNTHALA"/>
</dbReference>
<dbReference type="SMART" id="SM00863">
    <property type="entry name" value="tRNA_SAD"/>
    <property type="match status" value="1"/>
</dbReference>
<dbReference type="SUPFAM" id="SSF55681">
    <property type="entry name" value="Class II aaRS and biotin synthetases"/>
    <property type="match status" value="1"/>
</dbReference>
<dbReference type="SUPFAM" id="SSF101353">
    <property type="entry name" value="Putative anticodon-binding domain of alanyl-tRNA synthetase (AlaRS)"/>
    <property type="match status" value="1"/>
</dbReference>
<dbReference type="SUPFAM" id="SSF55186">
    <property type="entry name" value="ThrRS/AlaRS common domain"/>
    <property type="match status" value="1"/>
</dbReference>
<dbReference type="SUPFAM" id="SSF50447">
    <property type="entry name" value="Translation proteins"/>
    <property type="match status" value="1"/>
</dbReference>
<dbReference type="PROSITE" id="PS50860">
    <property type="entry name" value="AA_TRNA_LIGASE_II_ALA"/>
    <property type="match status" value="1"/>
</dbReference>
<keyword id="KW-0030">Aminoacyl-tRNA synthetase</keyword>
<keyword id="KW-0067">ATP-binding</keyword>
<keyword id="KW-0963">Cytoplasm</keyword>
<keyword id="KW-0436">Ligase</keyword>
<keyword id="KW-0479">Metal-binding</keyword>
<keyword id="KW-0547">Nucleotide-binding</keyword>
<keyword id="KW-0648">Protein biosynthesis</keyword>
<keyword id="KW-0694">RNA-binding</keyword>
<keyword id="KW-0820">tRNA-binding</keyword>
<keyword id="KW-0862">Zinc</keyword>
<reference key="1">
    <citation type="journal article" date="2007" name="Proc. Natl. Acad. Sci. U.S.A.">
        <title>Genomic and metabolic adaptations of Methanobrevibacter smithii to the human gut.</title>
        <authorList>
            <person name="Samuel B.S."/>
            <person name="Hansen E.E."/>
            <person name="Manchester J.K."/>
            <person name="Coutinho P.M."/>
            <person name="Henrissat B."/>
            <person name="Fulton R."/>
            <person name="Latreille P."/>
            <person name="Kim K."/>
            <person name="Wilson R.K."/>
            <person name="Gordon J.I."/>
        </authorList>
    </citation>
    <scope>NUCLEOTIDE SEQUENCE [LARGE SCALE GENOMIC DNA]</scope>
    <source>
        <strain>ATCC 35061 / DSM 861 / OCM 144 / PS</strain>
    </source>
</reference>
<proteinExistence type="inferred from homology"/>
<name>SYA_METS3</name>
<protein>
    <recommendedName>
        <fullName evidence="1">Alanine--tRNA ligase</fullName>
        <ecNumber evidence="1">6.1.1.7</ecNumber>
    </recommendedName>
    <alternativeName>
        <fullName evidence="1">Alanyl-tRNA synthetase</fullName>
        <shortName evidence="1">AlaRS</shortName>
    </alternativeName>
</protein>
<feature type="chain" id="PRO_0000347884" description="Alanine--tRNA ligase">
    <location>
        <begin position="1"/>
        <end position="897"/>
    </location>
</feature>
<feature type="binding site" evidence="1">
    <location>
        <position position="591"/>
    </location>
    <ligand>
        <name>Zn(2+)</name>
        <dbReference type="ChEBI" id="CHEBI:29105"/>
    </ligand>
</feature>
<feature type="binding site" evidence="1">
    <location>
        <position position="595"/>
    </location>
    <ligand>
        <name>Zn(2+)</name>
        <dbReference type="ChEBI" id="CHEBI:29105"/>
    </ligand>
</feature>
<feature type="binding site" evidence="1">
    <location>
        <position position="695"/>
    </location>
    <ligand>
        <name>Zn(2+)</name>
        <dbReference type="ChEBI" id="CHEBI:29105"/>
    </ligand>
</feature>
<feature type="binding site" evidence="1">
    <location>
        <position position="699"/>
    </location>
    <ligand>
        <name>Zn(2+)</name>
        <dbReference type="ChEBI" id="CHEBI:29105"/>
    </ligand>
</feature>
<organism>
    <name type="scientific">Methanobrevibacter smithii (strain ATCC 35061 / DSM 861 / OCM 144 / PS)</name>
    <dbReference type="NCBI Taxonomy" id="420247"/>
    <lineage>
        <taxon>Archaea</taxon>
        <taxon>Methanobacteriati</taxon>
        <taxon>Methanobacteriota</taxon>
        <taxon>Methanomada group</taxon>
        <taxon>Methanobacteria</taxon>
        <taxon>Methanobacteriales</taxon>
        <taxon>Methanobacteriaceae</taxon>
        <taxon>Methanobrevibacter</taxon>
    </lineage>
</organism>
<gene>
    <name evidence="1" type="primary">alaS</name>
    <name type="ordered locus">Msm_0619</name>
</gene>